<proteinExistence type="evidence at protein level"/>
<evidence type="ECO:0000255" key="1"/>
<evidence type="ECO:0000255" key="2">
    <source>
        <dbReference type="PROSITE-ProRule" id="PRU00445"/>
    </source>
</evidence>
<evidence type="ECO:0000255" key="3">
    <source>
        <dbReference type="PROSITE-ProRule" id="PRU01118"/>
    </source>
</evidence>
<evidence type="ECO:0000269" key="4">
    <source>
    </source>
</evidence>
<evidence type="ECO:0000269" key="5">
    <source>
    </source>
</evidence>
<evidence type="ECO:0000303" key="6">
    <source>
    </source>
</evidence>
<evidence type="ECO:0000305" key="7"/>
<evidence type="ECO:0000305" key="8">
    <source>
    </source>
</evidence>
<accession>P76347</accession>
<accession>P94750</accession>
<gene>
    <name type="primary">yeeJ</name>
    <name type="ordered locus">b1978</name>
    <name type="ordered locus">JW5833</name>
</gene>
<reference key="1">
    <citation type="journal article" date="1996" name="DNA Res.">
        <title>A 460-kb DNA sequence of the Escherichia coli K-12 genome corresponding to the 40.1-50.0 min region on the linkage map.</title>
        <authorList>
            <person name="Itoh T."/>
            <person name="Aiba H."/>
            <person name="Baba T."/>
            <person name="Fujita K."/>
            <person name="Hayashi K."/>
            <person name="Inada T."/>
            <person name="Isono K."/>
            <person name="Kasai H."/>
            <person name="Kimura S."/>
            <person name="Kitakawa M."/>
            <person name="Kitagawa M."/>
            <person name="Makino K."/>
            <person name="Miki T."/>
            <person name="Mizobuchi K."/>
            <person name="Mori H."/>
            <person name="Mori T."/>
            <person name="Motomura K."/>
            <person name="Nakade S."/>
            <person name="Nakamura Y."/>
            <person name="Nashimoto H."/>
            <person name="Nishio Y."/>
            <person name="Oshima T."/>
            <person name="Saito N."/>
            <person name="Sampei G."/>
            <person name="Seki Y."/>
            <person name="Sivasundaram S."/>
            <person name="Tagami H."/>
            <person name="Takeda J."/>
            <person name="Takemoto K."/>
            <person name="Wada C."/>
            <person name="Yamamoto Y."/>
            <person name="Horiuchi T."/>
        </authorList>
    </citation>
    <scope>NUCLEOTIDE SEQUENCE [LARGE SCALE GENOMIC DNA]</scope>
    <source>
        <strain>K12 / W3110 / ATCC 27325 / DSM 5911</strain>
    </source>
</reference>
<reference key="2">
    <citation type="journal article" date="1997" name="Science">
        <title>The complete genome sequence of Escherichia coli K-12.</title>
        <authorList>
            <person name="Blattner F.R."/>
            <person name="Plunkett G. III"/>
            <person name="Bloch C.A."/>
            <person name="Perna N.T."/>
            <person name="Burland V."/>
            <person name="Riley M."/>
            <person name="Collado-Vides J."/>
            <person name="Glasner J.D."/>
            <person name="Rode C.K."/>
            <person name="Mayhew G.F."/>
            <person name="Gregor J."/>
            <person name="Davis N.W."/>
            <person name="Kirkpatrick H.A."/>
            <person name="Goeden M.A."/>
            <person name="Rose D.J."/>
            <person name="Mau B."/>
            <person name="Shao Y."/>
        </authorList>
    </citation>
    <scope>NUCLEOTIDE SEQUENCE [LARGE SCALE GENOMIC DNA]</scope>
    <source>
        <strain>K12 / MG1655 / ATCC 47076</strain>
    </source>
</reference>
<reference key="3">
    <citation type="journal article" date="2006" name="Nucleic Acids Res.">
        <title>Escherichia coli K-12: a cooperatively developed annotation snapshot -- 2005.</title>
        <authorList>
            <person name="Riley M."/>
            <person name="Abe T."/>
            <person name="Arnaud M.B."/>
            <person name="Berlyn M.K.B."/>
            <person name="Blattner F.R."/>
            <person name="Chaudhuri R.R."/>
            <person name="Glasner J.D."/>
            <person name="Horiuchi T."/>
            <person name="Keseler I.M."/>
            <person name="Kosuge T."/>
            <person name="Mori H."/>
            <person name="Perna N.T."/>
            <person name="Plunkett G. III"/>
            <person name="Rudd K.E."/>
            <person name="Serres M.H."/>
            <person name="Thomas G.H."/>
            <person name="Thomson N.R."/>
            <person name="Wishart D."/>
            <person name="Wanner B.L."/>
        </authorList>
    </citation>
    <scope>SEQUENCE REVISION TO 105</scope>
</reference>
<reference key="4">
    <citation type="journal article" date="2006" name="Mol. Syst. Biol.">
        <title>Highly accurate genome sequences of Escherichia coli K-12 strains MG1655 and W3110.</title>
        <authorList>
            <person name="Hayashi K."/>
            <person name="Morooka N."/>
            <person name="Yamamoto Y."/>
            <person name="Fujita K."/>
            <person name="Isono K."/>
            <person name="Choi S."/>
            <person name="Ohtsubo E."/>
            <person name="Baba T."/>
            <person name="Wanner B.L."/>
            <person name="Mori H."/>
            <person name="Horiuchi T."/>
        </authorList>
    </citation>
    <scope>NUCLEOTIDE SEQUENCE [LARGE SCALE GENOMIC DNA]</scope>
    <source>
        <strain>K12 / W3110 / ATCC 27325 / DSM 5911</strain>
    </source>
</reference>
<reference key="5">
    <citation type="journal article" date="2005" name="J. Bacteriol.">
        <title>Combined inactivation and expression strategy to study gene function under physiological conditions: application to identification of new Escherichia coli adhesins.</title>
        <authorList>
            <person name="Roux A."/>
            <person name="Beloin C."/>
            <person name="Ghigo J.M."/>
        </authorList>
    </citation>
    <scope>POSSIBLE FUNCTION IN ADHESION</scope>
    <scope>DISRUPTION PHENOTYPE</scope>
    <source>
        <strain>K12 / MG1655 / ATCC 47076</strain>
    </source>
</reference>
<reference key="6">
    <citation type="journal article" date="2017" name="Sci. Rep.">
        <title>YeeJ is an inverse autotransporter from Escherichia coli that binds to peptidoglycan and promotes biofilm formation.</title>
        <authorList>
            <person name="Martinez-Gil M."/>
            <person name="Goh K.G.K."/>
            <person name="Rackaityte E."/>
            <person name="Sakamoto C."/>
            <person name="Audrain B."/>
            <person name="Moriel D.G."/>
            <person name="Totsika M."/>
            <person name="Ghigo J.M."/>
            <person name="Schembri M.A."/>
            <person name="Beloin C."/>
        </authorList>
    </citation>
    <scope>FUNCTION</scope>
    <scope>SUBCELLULAR LOCATION</scope>
    <scope>INDUCTION</scope>
    <scope>DOMAIN</scope>
    <scope>PROBABLE PEPTIDOGLYCAN-BINDING</scope>
</reference>
<dbReference type="EMBL" id="U00096">
    <property type="protein sequence ID" value="AAC75042.4"/>
    <property type="status" value="ALT_INIT"/>
    <property type="molecule type" value="Genomic_DNA"/>
</dbReference>
<dbReference type="EMBL" id="AP009048">
    <property type="protein sequence ID" value="BAA15800.2"/>
    <property type="status" value="ALT_INIT"/>
    <property type="molecule type" value="Genomic_DNA"/>
</dbReference>
<dbReference type="PIR" id="D64962">
    <property type="entry name" value="D64962"/>
</dbReference>
<dbReference type="RefSeq" id="NP_416485.4">
    <property type="nucleotide sequence ID" value="NC_000913.3"/>
</dbReference>
<dbReference type="SMR" id="P76347"/>
<dbReference type="BioGRID" id="4260398">
    <property type="interactions" value="22"/>
</dbReference>
<dbReference type="DIP" id="DIP-28072N"/>
<dbReference type="FunCoup" id="P76347">
    <property type="interactions" value="284"/>
</dbReference>
<dbReference type="IntAct" id="P76347">
    <property type="interactions" value="2"/>
</dbReference>
<dbReference type="STRING" id="511145.b1978"/>
<dbReference type="TCDB" id="1.B.54.1.10">
    <property type="family name" value="the intimin/invasin (int/inv) or autotransporter-3 (at-3) family"/>
</dbReference>
<dbReference type="jPOST" id="P76347"/>
<dbReference type="PaxDb" id="511145-b1978"/>
<dbReference type="EnsemblBacteria" id="AAC75042">
    <property type="protein sequence ID" value="AAC75042"/>
    <property type="gene ID" value="b1978"/>
</dbReference>
<dbReference type="GeneID" id="946498"/>
<dbReference type="KEGG" id="ecj:JW5833"/>
<dbReference type="KEGG" id="eco:b1978"/>
<dbReference type="PATRIC" id="fig|511145.12.peg.2056"/>
<dbReference type="EchoBASE" id="EB3160"/>
<dbReference type="eggNOG" id="COG1388">
    <property type="taxonomic scope" value="Bacteria"/>
</dbReference>
<dbReference type="eggNOG" id="COG1470">
    <property type="taxonomic scope" value="Bacteria"/>
</dbReference>
<dbReference type="InParanoid" id="P76347"/>
<dbReference type="OrthoDB" id="8320584at2"/>
<dbReference type="PhylomeDB" id="P76347"/>
<dbReference type="BioCyc" id="EcoCyc:G7064-MONOMER"/>
<dbReference type="PRO" id="PR:P76347"/>
<dbReference type="Proteomes" id="UP000000625">
    <property type="component" value="Chromosome"/>
</dbReference>
<dbReference type="GO" id="GO:0009279">
    <property type="term" value="C:cell outer membrane"/>
    <property type="evidence" value="ECO:0000318"/>
    <property type="project" value="GO_Central"/>
</dbReference>
<dbReference type="GO" id="GO:0043708">
    <property type="term" value="P:cell adhesion involved in biofilm formation"/>
    <property type="evidence" value="ECO:0000315"/>
    <property type="project" value="EcoCyc"/>
</dbReference>
<dbReference type="GO" id="GO:0043709">
    <property type="term" value="P:cell adhesion involved in single-species biofilm formation"/>
    <property type="evidence" value="ECO:0000314"/>
    <property type="project" value="UniProtKB"/>
</dbReference>
<dbReference type="FunFam" id="2.60.40.10:FF:000182">
    <property type="entry name" value="Gamma intimin"/>
    <property type="match status" value="6"/>
</dbReference>
<dbReference type="FunFam" id="2.40.160.160:FF:000001">
    <property type="entry name" value="Intimin-like inverse autotransporter SinH"/>
    <property type="match status" value="1"/>
</dbReference>
<dbReference type="FunFam" id="2.60.40.10:FF:002045">
    <property type="entry name" value="Putative adhesin"/>
    <property type="match status" value="1"/>
</dbReference>
<dbReference type="Gene3D" id="2.60.40.1080">
    <property type="match status" value="1"/>
</dbReference>
<dbReference type="Gene3D" id="2.60.40.10">
    <property type="entry name" value="Immunoglobulins"/>
    <property type="match status" value="16"/>
</dbReference>
<dbReference type="Gene3D" id="2.40.160.160">
    <property type="entry name" value="Inverse autotransporter, beta-domain"/>
    <property type="match status" value="1"/>
</dbReference>
<dbReference type="Gene3D" id="3.10.100.10">
    <property type="entry name" value="Mannose-Binding Protein A, subunit A"/>
    <property type="match status" value="1"/>
</dbReference>
<dbReference type="InterPro" id="IPR003344">
    <property type="entry name" value="Big_1_dom"/>
</dbReference>
<dbReference type="InterPro" id="IPR016186">
    <property type="entry name" value="C-type_lectin-like/link_sf"/>
</dbReference>
<dbReference type="InterPro" id="IPR024519">
    <property type="entry name" value="IAT_beta"/>
</dbReference>
<dbReference type="InterPro" id="IPR038177">
    <property type="entry name" value="IAT_beta_sf"/>
</dbReference>
<dbReference type="InterPro" id="IPR013783">
    <property type="entry name" value="Ig-like_fold"/>
</dbReference>
<dbReference type="InterPro" id="IPR051715">
    <property type="entry name" value="Intimin-Invasin_domain"/>
</dbReference>
<dbReference type="InterPro" id="IPR003535">
    <property type="entry name" value="Intimin/invasin_bac"/>
</dbReference>
<dbReference type="InterPro" id="IPR008964">
    <property type="entry name" value="Invasin/intimin_cell_adhesion"/>
</dbReference>
<dbReference type="InterPro" id="IPR015217">
    <property type="entry name" value="Invasin_dom_3"/>
</dbReference>
<dbReference type="InterPro" id="IPR018392">
    <property type="entry name" value="LysM_dom"/>
</dbReference>
<dbReference type="InterPro" id="IPR022409">
    <property type="entry name" value="PKD/Chitinase_dom"/>
</dbReference>
<dbReference type="PANTHER" id="PTHR39576:SF2">
    <property type="entry name" value="ATTACHING AND EFFACING PROTEIN HOMOLOG-RELATED"/>
    <property type="match status" value="1"/>
</dbReference>
<dbReference type="PANTHER" id="PTHR39576">
    <property type="entry name" value="ATTACHING AND EFFACING PROTEIN HOMOLOG-RELATED-RELATED"/>
    <property type="match status" value="1"/>
</dbReference>
<dbReference type="Pfam" id="PF02369">
    <property type="entry name" value="Big_1"/>
    <property type="match status" value="13"/>
</dbReference>
<dbReference type="Pfam" id="PF11924">
    <property type="entry name" value="IAT_beta"/>
    <property type="match status" value="1"/>
</dbReference>
<dbReference type="Pfam" id="PF09134">
    <property type="entry name" value="Invasin_D3"/>
    <property type="match status" value="1"/>
</dbReference>
<dbReference type="PRINTS" id="PR01369">
    <property type="entry name" value="INTIMIN"/>
</dbReference>
<dbReference type="SMART" id="SM00634">
    <property type="entry name" value="BID_1"/>
    <property type="match status" value="13"/>
</dbReference>
<dbReference type="SMART" id="SM00089">
    <property type="entry name" value="PKD"/>
    <property type="match status" value="4"/>
</dbReference>
<dbReference type="SUPFAM" id="SSF49373">
    <property type="entry name" value="Invasin/intimin cell-adhesion fragments"/>
    <property type="match status" value="16"/>
</dbReference>
<dbReference type="PROSITE" id="PS51127">
    <property type="entry name" value="BIG1"/>
    <property type="match status" value="13"/>
</dbReference>
<dbReference type="PROSITE" id="PS51782">
    <property type="entry name" value="LYSM"/>
    <property type="match status" value="1"/>
</dbReference>
<feature type="signal peptide" evidence="1">
    <location>
        <begin position="1"/>
        <end position="26"/>
    </location>
</feature>
<feature type="chain" id="PRO_0000211833" description="Inverse autotransporter adhesin YeeJ">
    <location>
        <begin position="27"/>
        <end position="2339"/>
    </location>
</feature>
<feature type="domain" description="LysM" evidence="3">
    <location>
        <begin position="50"/>
        <end position="98"/>
    </location>
</feature>
<feature type="domain" description="Big-1 1" evidence="2">
    <location>
        <begin position="721"/>
        <end position="815"/>
    </location>
</feature>
<feature type="domain" description="Big-1 2" evidence="2">
    <location>
        <begin position="822"/>
        <end position="913"/>
    </location>
</feature>
<feature type="domain" description="Big-1 3" evidence="2">
    <location>
        <begin position="920"/>
        <end position="1017"/>
    </location>
</feature>
<feature type="domain" description="Big-1 4" evidence="2">
    <location>
        <begin position="1024"/>
        <end position="1121"/>
    </location>
</feature>
<feature type="domain" description="Big-1 5" evidence="2">
    <location>
        <begin position="1128"/>
        <end position="1221"/>
    </location>
</feature>
<feature type="domain" description="Big-1 6" evidence="2">
    <location>
        <begin position="1229"/>
        <end position="1331"/>
    </location>
</feature>
<feature type="domain" description="Big-1 7" evidence="2">
    <location>
        <begin position="1339"/>
        <end position="1432"/>
    </location>
</feature>
<feature type="domain" description="Big-1 8" evidence="2">
    <location>
        <begin position="1439"/>
        <end position="1535"/>
    </location>
</feature>
<feature type="domain" description="Big-1 9" evidence="2">
    <location>
        <begin position="1542"/>
        <end position="1639"/>
    </location>
</feature>
<feature type="domain" description="Big-1 10" evidence="2">
    <location>
        <begin position="1646"/>
        <end position="1730"/>
    </location>
</feature>
<feature type="domain" description="Big-1 11" evidence="2">
    <location>
        <begin position="1746"/>
        <end position="1837"/>
    </location>
</feature>
<feature type="domain" description="Big-1 12" evidence="2">
    <location>
        <begin position="1840"/>
        <end position="1934"/>
    </location>
</feature>
<feature type="domain" description="Big-1 13" evidence="2">
    <location>
        <begin position="1942"/>
        <end position="2034"/>
    </location>
</feature>
<feature type="region of interest" description="Inverse autotransporter">
    <location>
        <begin position="125"/>
        <end position="400"/>
    </location>
</feature>
<feature type="region of interest" description="Invasin 3 domain">
    <location>
        <begin position="513"/>
        <end position="605"/>
    </location>
</feature>
<feature type="region of interest" description="C-type lectin domain">
    <location>
        <begin position="2236"/>
        <end position="2339"/>
    </location>
</feature>
<protein>
    <recommendedName>
        <fullName evidence="6">Inverse autotransporter adhesin YeeJ</fullName>
    </recommendedName>
</protein>
<comment type="function">
    <text evidence="4 5">A cryptic inverse autotransporter, it is not expressed in wild-type strain MG1655 (PubMed:28900103). Upon overexpression shows increased adherence to polyvinyl chloride (PVC) plates and increased mature biofilm formation (PubMed:15659678, PubMed:28900103). Probably binds peptidoglycan (PubMed:28900103).</text>
</comment>
<comment type="subcellular location">
    <subcellularLocation>
        <location evidence="5">Cell outer membrane</location>
    </subcellularLocation>
    <text evidence="5">The passenger domain (approximately residues 401-2339) is exposed on the cell surface, and may be processed and released to the extracellular milieu (PubMed:28900103).</text>
</comment>
<comment type="induction">
    <text evidence="5">In wild-type cells repressed by pnp; even in a pnp deletion mutation the levels of YeeJ produced do not allow biofilm formation (PubMed:28900103).</text>
</comment>
<comment type="domain">
    <text evidence="5 8">Has a signal sequence, a Lys M domain, an inverse autotransporter domain (residues 125-400) predicted to form a 12-stranded beta-barrel, followed by the passenger domain with an invasin 3 domain (residues 513-605), 13 Big-1 domains and a C-type lectin domain (resides 2236-2339) (Probable). Deletion of the LysM domain (the exact residues are not given) yields a protein that binds less peptidoglycan, is less surface-exposed and possibly as a result makes less biolfilm (PubMed:28900103).</text>
</comment>
<comment type="disruption phenotype">
    <text evidence="4">No change in cell adhesion or biofilm formation (PubMed:15659678).</text>
</comment>
<comment type="miscellaneous">
    <text evidence="7">'Inverse' autotransporters have an N-terminal translocation domain followed by the passenger domain, as opposed to 'classical' autotransporters which have N-terminal passenger and C-terminal translocation domains.</text>
</comment>
<comment type="similarity">
    <text evidence="7">Belongs to the intimin/invasin family.</text>
</comment>
<comment type="sequence caution" evidence="8">
    <conflict type="erroneous initiation">
        <sequence resource="EMBL-CDS" id="AAC75042"/>
    </conflict>
    <text>Extended N-terminus.</text>
</comment>
<comment type="sequence caution" evidence="8">
    <conflict type="erroneous initiation">
        <sequence resource="EMBL-CDS" id="BAA15800"/>
    </conflict>
    <text>Extended N-terminus.</text>
</comment>
<name>YEEJ_ECOLI</name>
<keyword id="KW-0130">Cell adhesion</keyword>
<keyword id="KW-0998">Cell outer membrane</keyword>
<keyword id="KW-0472">Membrane</keyword>
<keyword id="KW-1185">Reference proteome</keyword>
<keyword id="KW-0677">Repeat</keyword>
<keyword id="KW-0732">Signal</keyword>
<sequence>MGIKLRRLTAGICLITQLAFPMAAAAQGVVNAATQQPVPAQIAIANANTVPYTLGALESAQSVAERFGISVAELRKLNQFRTFARGFDNVRQGDELDVPAQVSEKKLTPPPGNSSDNLEQQIASTSQQIGSLLAEDMNSEQAANMARGWASSQASGAMTDWLSRFGTARITLGVDEDFSLKNSQFDFLHPWYETPDNLFFSQHTLHRTDERTQINNGLGWRHFTPTWMSGINFFFDHDLSRYHSRAGIGAEYWRDYLKLSSNGYLRLTNWRSAPELDNDYEARPANGWDVRAESWLPAWPHLGGKLVYEQYYGDEVALFDKDDRQSNPHAITAGLNYTPFPLMTFSAEQRQGKQGENDTRFAVDFTWQPGSAMQKQLDPNEVAARRSLAGSRYDLVDRNNNIVLEYRKKELVRLTLTDPVTGKSGEVKSLVSSLQTKYALKGYNVEATALEAAGGKVVTTGKDILVTLPAYRFTSTPETDNTWPIEVTAEDVKGNLSNREQSMVVVQAPTLSQKDSSVSLSTQTLNADSHSTATLTFIAHDAAGNPVVGLVLSTRHEGVQDITLSDWKDNGDGSYTQILTTGAMSGTLTLMPQLNGVDAAKAPAVVNIISVSSSRTHSSIKIDKDRYLSGNPIEVTVELRDENDKPVKEQKQQLNNAVSIDNVKPGVTTDWKETADGVYKATYTAYTKGSGLTAKLLMQNWNEDLHTAGFIIDANPQSAKIATLSASNNGVLANENAANTVSVNVADEGSNPINDHTVTFAVLSGSATSFNNQNTAKTDVNGLATFDLKSSKQEDNTVEVTLENGVKQTLIVSFVGDSSTAQVDLQKSKNEVVADGNDSVTMTATVRDAKGNLLNDVMVTFNVNSAEAKLSQTEVNSHDGIATATLTSLKNGDYRVTASVSSGSQANQQVNFIGDQSTAALTLSVPSGDITVTNTAPQYMTATLQDKNGNPLKDKEITFSVPNDVASKFSISNGGKGMTDSNGVAIASLTGTLAGTHMIMARLANSNVSDAQPMTFVADKDRAVVVLQTSKAEIIGNGVDETTLTATVKDPSNHPVAGITVNFTMPQDVAANFTLENNGIAITQANGEAHVTLKGKKAGTHTVTATLGNNNTSDSQPVTFVADKASAQVVLQISKDEITGNGVDSATLTATVKDQFDNEVNNLPVTFSSASSGLTLTPGVSNTNESGIAQATLAGVAFGEKTVTASLANNGASDNKTVHFIGDTAAAKIIELAPVPDSIIAGTPQNSSGSVITATVVDNNGFPVKGVTVNFTSNAATAEMTNGGQAVTNEQGKATVTYTNTRSSIESGARPDTVEASLENGSSTLSTSINVNADASTAHLTLLQALFDTVSAGETTSLYIEVKDNYGNGVPQQEVTLSVSPSEGVTPSNNAIYTTNHDGNFYASFTATKAGVYQLTATLENGDSMQQTVTYVPNVANAEITLAASKDPVIADNNDLTTLTATVADTEGNAIANTEVTFTLPEDVKANFTLSDGGKVITDAEGKAKVTLKGTKAGAHTVTASMTGGKSEQLVVNFIADTLTAQVNLNVTEDNFIANNVGMTRLQATVTDGNGNPLANEAVTFTLPADVSASFTLGQGGSAITDINGKAEVTLSGTKSGTYPVTVSVNNYGVSDTKQVTLIADAGTAKLASLTSVYSFVVSTTEGATMTASVTDANGNPVEGIKVNFRGTSVTLSSTSVETDDRGFAEILVTSTEVGLKTVSASLADKPTEVISRLLNASADVNSATITSLEIPEGQVMVAQDVAVKAHVNDQFGNPVAHQPVTFSAEPSSQMIISQNTVSTNTQGVAEVTMTPERNGSYMVKASLPNGASLEKQLEAIDEKLTLTASSPLIGVYAPTGATLTATLTSANGTPVEGQVINFSVTPEGATLSGGKVRTNSSGQAPVVLTSNKVGTYTVTASFHNGVTIQTQTTVKVTGNSSTAHVASFIADPSTIAATNTDLSTLKATVEDGSGNLIEGLTVYFALKSGSATLTSLTAVTDQNGIATTSVKGAMTGSVTVSAVTTAGGMQTVDITLVAGPADTSQSVLKSNRSSLKGDYTDSAELRLVLHDISGNPIKVSEGMEFVQSGTNVPYIKISAIDYSLNINGDYKATVTGGGEGIATLIPVLNGVHQAGLSTTIQFTRAEDKIMSGTVSVNGTDLPTTTFPSQGFTGAYYQLNNDNFAPGKTAADYEFSSSASWVDVDATGKVTFKNVGSNSERITATPKSGGPSYVYEIRVKSWWVNAGEAFMIYSLAENFCSSNGYTLPRANYLNHCSSRGIGSLYSEWGDMGHYTTDAGFQSNMYWSSSPANSSEQYVVSLATGDQSVFEKLGFAYATCYKNL</sequence>
<organism>
    <name type="scientific">Escherichia coli (strain K12)</name>
    <dbReference type="NCBI Taxonomy" id="83333"/>
    <lineage>
        <taxon>Bacteria</taxon>
        <taxon>Pseudomonadati</taxon>
        <taxon>Pseudomonadota</taxon>
        <taxon>Gammaproteobacteria</taxon>
        <taxon>Enterobacterales</taxon>
        <taxon>Enterobacteriaceae</taxon>
        <taxon>Escherichia</taxon>
    </lineage>
</organism>